<dbReference type="EC" id="2.5.1.6" evidence="1"/>
<dbReference type="EMBL" id="CP000829">
    <property type="protein sequence ID" value="ACI61376.1"/>
    <property type="molecule type" value="Genomic_DNA"/>
</dbReference>
<dbReference type="SMR" id="B5XM14"/>
<dbReference type="KEGG" id="soz:Spy49_1083c"/>
<dbReference type="HOGENOM" id="CLU_041802_1_1_9"/>
<dbReference type="UniPathway" id="UPA00315">
    <property type="reaction ID" value="UER00080"/>
</dbReference>
<dbReference type="Proteomes" id="UP000001039">
    <property type="component" value="Chromosome"/>
</dbReference>
<dbReference type="GO" id="GO:0005737">
    <property type="term" value="C:cytoplasm"/>
    <property type="evidence" value="ECO:0007669"/>
    <property type="project" value="UniProtKB-SubCell"/>
</dbReference>
<dbReference type="GO" id="GO:0005524">
    <property type="term" value="F:ATP binding"/>
    <property type="evidence" value="ECO:0007669"/>
    <property type="project" value="UniProtKB-UniRule"/>
</dbReference>
<dbReference type="GO" id="GO:0000287">
    <property type="term" value="F:magnesium ion binding"/>
    <property type="evidence" value="ECO:0007669"/>
    <property type="project" value="UniProtKB-UniRule"/>
</dbReference>
<dbReference type="GO" id="GO:0004478">
    <property type="term" value="F:methionine adenosyltransferase activity"/>
    <property type="evidence" value="ECO:0007669"/>
    <property type="project" value="UniProtKB-UniRule"/>
</dbReference>
<dbReference type="GO" id="GO:0006730">
    <property type="term" value="P:one-carbon metabolic process"/>
    <property type="evidence" value="ECO:0007669"/>
    <property type="project" value="UniProtKB-KW"/>
</dbReference>
<dbReference type="GO" id="GO:0006556">
    <property type="term" value="P:S-adenosylmethionine biosynthetic process"/>
    <property type="evidence" value="ECO:0007669"/>
    <property type="project" value="UniProtKB-UniRule"/>
</dbReference>
<dbReference type="CDD" id="cd18079">
    <property type="entry name" value="S-AdoMet_synt"/>
    <property type="match status" value="1"/>
</dbReference>
<dbReference type="FunFam" id="3.30.300.10:FF:000003">
    <property type="entry name" value="S-adenosylmethionine synthase"/>
    <property type="match status" value="1"/>
</dbReference>
<dbReference type="Gene3D" id="3.30.300.10">
    <property type="match status" value="3"/>
</dbReference>
<dbReference type="HAMAP" id="MF_00086">
    <property type="entry name" value="S_AdoMet_synth1"/>
    <property type="match status" value="1"/>
</dbReference>
<dbReference type="InterPro" id="IPR022631">
    <property type="entry name" value="ADOMET_SYNTHASE_CS"/>
</dbReference>
<dbReference type="InterPro" id="IPR022630">
    <property type="entry name" value="S-AdoMet_synt_C"/>
</dbReference>
<dbReference type="InterPro" id="IPR022629">
    <property type="entry name" value="S-AdoMet_synt_central"/>
</dbReference>
<dbReference type="InterPro" id="IPR022628">
    <property type="entry name" value="S-AdoMet_synt_N"/>
</dbReference>
<dbReference type="InterPro" id="IPR002133">
    <property type="entry name" value="S-AdoMet_synthetase"/>
</dbReference>
<dbReference type="InterPro" id="IPR022636">
    <property type="entry name" value="S-AdoMet_synthetase_sfam"/>
</dbReference>
<dbReference type="NCBIfam" id="TIGR01034">
    <property type="entry name" value="metK"/>
    <property type="match status" value="1"/>
</dbReference>
<dbReference type="PANTHER" id="PTHR11964">
    <property type="entry name" value="S-ADENOSYLMETHIONINE SYNTHETASE"/>
    <property type="match status" value="1"/>
</dbReference>
<dbReference type="Pfam" id="PF02773">
    <property type="entry name" value="S-AdoMet_synt_C"/>
    <property type="match status" value="1"/>
</dbReference>
<dbReference type="Pfam" id="PF02772">
    <property type="entry name" value="S-AdoMet_synt_M"/>
    <property type="match status" value="1"/>
</dbReference>
<dbReference type="Pfam" id="PF00438">
    <property type="entry name" value="S-AdoMet_synt_N"/>
    <property type="match status" value="1"/>
</dbReference>
<dbReference type="PIRSF" id="PIRSF000497">
    <property type="entry name" value="MAT"/>
    <property type="match status" value="1"/>
</dbReference>
<dbReference type="SUPFAM" id="SSF55973">
    <property type="entry name" value="S-adenosylmethionine synthetase"/>
    <property type="match status" value="3"/>
</dbReference>
<dbReference type="PROSITE" id="PS00376">
    <property type="entry name" value="ADOMET_SYNTHASE_1"/>
    <property type="match status" value="1"/>
</dbReference>
<dbReference type="PROSITE" id="PS00377">
    <property type="entry name" value="ADOMET_SYNTHASE_2"/>
    <property type="match status" value="1"/>
</dbReference>
<comment type="function">
    <text evidence="1">Catalyzes the formation of S-adenosylmethionine (AdoMet) from methionine and ATP. The overall synthetic reaction is composed of two sequential steps, AdoMet formation and the subsequent tripolyphosphate hydrolysis which occurs prior to release of AdoMet from the enzyme.</text>
</comment>
<comment type="catalytic activity">
    <reaction evidence="1">
        <text>L-methionine + ATP + H2O = S-adenosyl-L-methionine + phosphate + diphosphate</text>
        <dbReference type="Rhea" id="RHEA:21080"/>
        <dbReference type="ChEBI" id="CHEBI:15377"/>
        <dbReference type="ChEBI" id="CHEBI:30616"/>
        <dbReference type="ChEBI" id="CHEBI:33019"/>
        <dbReference type="ChEBI" id="CHEBI:43474"/>
        <dbReference type="ChEBI" id="CHEBI:57844"/>
        <dbReference type="ChEBI" id="CHEBI:59789"/>
        <dbReference type="EC" id="2.5.1.6"/>
    </reaction>
</comment>
<comment type="cofactor">
    <cofactor evidence="1">
        <name>Mg(2+)</name>
        <dbReference type="ChEBI" id="CHEBI:18420"/>
    </cofactor>
    <text evidence="1">Binds 2 divalent ions per subunit.</text>
</comment>
<comment type="cofactor">
    <cofactor evidence="1">
        <name>K(+)</name>
        <dbReference type="ChEBI" id="CHEBI:29103"/>
    </cofactor>
    <text evidence="1">Binds 1 potassium ion per subunit.</text>
</comment>
<comment type="pathway">
    <text evidence="1">Amino-acid biosynthesis; S-adenosyl-L-methionine biosynthesis; S-adenosyl-L-methionine from L-methionine: step 1/1.</text>
</comment>
<comment type="subunit">
    <text evidence="1">Homotetramer; dimer of dimers.</text>
</comment>
<comment type="subcellular location">
    <subcellularLocation>
        <location evidence="1">Cytoplasm</location>
    </subcellularLocation>
</comment>
<comment type="similarity">
    <text evidence="1">Belongs to the AdoMet synthase family.</text>
</comment>
<feature type="chain" id="PRO_1000093094" description="S-adenosylmethionine synthase">
    <location>
        <begin position="1"/>
        <end position="398"/>
    </location>
</feature>
<feature type="region of interest" description="Flexible loop" evidence="1">
    <location>
        <begin position="100"/>
        <end position="110"/>
    </location>
</feature>
<feature type="binding site" description="in other chain" evidence="1">
    <location>
        <position position="16"/>
    </location>
    <ligand>
        <name>ATP</name>
        <dbReference type="ChEBI" id="CHEBI:30616"/>
        <note>ligand shared between two neighboring subunits</note>
    </ligand>
</feature>
<feature type="binding site" evidence="1">
    <location>
        <position position="18"/>
    </location>
    <ligand>
        <name>Mg(2+)</name>
        <dbReference type="ChEBI" id="CHEBI:18420"/>
    </ligand>
</feature>
<feature type="binding site" evidence="1">
    <location>
        <position position="44"/>
    </location>
    <ligand>
        <name>K(+)</name>
        <dbReference type="ChEBI" id="CHEBI:29103"/>
    </ligand>
</feature>
<feature type="binding site" description="in other chain" evidence="1">
    <location>
        <position position="57"/>
    </location>
    <ligand>
        <name>L-methionine</name>
        <dbReference type="ChEBI" id="CHEBI:57844"/>
        <note>ligand shared between two neighboring subunits</note>
    </ligand>
</feature>
<feature type="binding site" description="in other chain" evidence="1">
    <location>
        <position position="100"/>
    </location>
    <ligand>
        <name>L-methionine</name>
        <dbReference type="ChEBI" id="CHEBI:57844"/>
        <note>ligand shared between two neighboring subunits</note>
    </ligand>
</feature>
<feature type="binding site" description="in other chain" evidence="1">
    <location>
        <begin position="174"/>
        <end position="176"/>
    </location>
    <ligand>
        <name>ATP</name>
        <dbReference type="ChEBI" id="CHEBI:30616"/>
        <note>ligand shared between two neighboring subunits</note>
    </ligand>
</feature>
<feature type="binding site" description="in other chain" evidence="1">
    <location>
        <begin position="241"/>
        <end position="242"/>
    </location>
    <ligand>
        <name>ATP</name>
        <dbReference type="ChEBI" id="CHEBI:30616"/>
        <note>ligand shared between two neighboring subunits</note>
    </ligand>
</feature>
<feature type="binding site" evidence="1">
    <location>
        <position position="250"/>
    </location>
    <ligand>
        <name>ATP</name>
        <dbReference type="ChEBI" id="CHEBI:30616"/>
        <note>ligand shared between two neighboring subunits</note>
    </ligand>
</feature>
<feature type="binding site" evidence="1">
    <location>
        <position position="250"/>
    </location>
    <ligand>
        <name>L-methionine</name>
        <dbReference type="ChEBI" id="CHEBI:57844"/>
        <note>ligand shared between two neighboring subunits</note>
    </ligand>
</feature>
<feature type="binding site" description="in other chain" evidence="1">
    <location>
        <begin position="256"/>
        <end position="257"/>
    </location>
    <ligand>
        <name>ATP</name>
        <dbReference type="ChEBI" id="CHEBI:30616"/>
        <note>ligand shared between two neighboring subunits</note>
    </ligand>
</feature>
<feature type="binding site" evidence="1">
    <location>
        <position position="273"/>
    </location>
    <ligand>
        <name>ATP</name>
        <dbReference type="ChEBI" id="CHEBI:30616"/>
        <note>ligand shared between two neighboring subunits</note>
    </ligand>
</feature>
<feature type="binding site" evidence="1">
    <location>
        <position position="277"/>
    </location>
    <ligand>
        <name>ATP</name>
        <dbReference type="ChEBI" id="CHEBI:30616"/>
        <note>ligand shared between two neighboring subunits</note>
    </ligand>
</feature>
<feature type="binding site" description="in other chain" evidence="1">
    <location>
        <position position="281"/>
    </location>
    <ligand>
        <name>L-methionine</name>
        <dbReference type="ChEBI" id="CHEBI:57844"/>
        <note>ligand shared between two neighboring subunits</note>
    </ligand>
</feature>
<reference key="1">
    <citation type="journal article" date="2008" name="J. Bacteriol.">
        <title>Genome sequence of a nephritogenic and highly transformable M49 strain of Streptococcus pyogenes.</title>
        <authorList>
            <person name="McShan W.M."/>
            <person name="Ferretti J.J."/>
            <person name="Karasawa T."/>
            <person name="Suvorov A.N."/>
            <person name="Lin S."/>
            <person name="Qin B."/>
            <person name="Jia H."/>
            <person name="Kenton S."/>
            <person name="Najar F."/>
            <person name="Wu H."/>
            <person name="Scott J."/>
            <person name="Roe B.A."/>
            <person name="Savic D.J."/>
        </authorList>
    </citation>
    <scope>NUCLEOTIDE SEQUENCE [LARGE SCALE GENOMIC DNA]</scope>
    <source>
        <strain>NZ131</strain>
    </source>
</reference>
<gene>
    <name evidence="1" type="primary">metK</name>
    <name type="ordered locus">Spy49_1083c</name>
</gene>
<protein>
    <recommendedName>
        <fullName evidence="1">S-adenosylmethionine synthase</fullName>
        <shortName evidence="1">AdoMet synthase</shortName>
        <ecNumber evidence="1">2.5.1.6</ecNumber>
    </recommendedName>
    <alternativeName>
        <fullName evidence="1">MAT</fullName>
    </alternativeName>
    <alternativeName>
        <fullName evidence="1">Methionine adenosyltransferase</fullName>
    </alternativeName>
</protein>
<organism>
    <name type="scientific">Streptococcus pyogenes serotype M49 (strain NZ131)</name>
    <dbReference type="NCBI Taxonomy" id="471876"/>
    <lineage>
        <taxon>Bacteria</taxon>
        <taxon>Bacillati</taxon>
        <taxon>Bacillota</taxon>
        <taxon>Bacilli</taxon>
        <taxon>Lactobacillales</taxon>
        <taxon>Streptococcaceae</taxon>
        <taxon>Streptococcus</taxon>
    </lineage>
</organism>
<proteinExistence type="inferred from homology"/>
<name>METK_STRPZ</name>
<evidence type="ECO:0000255" key="1">
    <source>
        <dbReference type="HAMAP-Rule" id="MF_00086"/>
    </source>
</evidence>
<keyword id="KW-0067">ATP-binding</keyword>
<keyword id="KW-0963">Cytoplasm</keyword>
<keyword id="KW-0460">Magnesium</keyword>
<keyword id="KW-0479">Metal-binding</keyword>
<keyword id="KW-0547">Nucleotide-binding</keyword>
<keyword id="KW-0554">One-carbon metabolism</keyword>
<keyword id="KW-0630">Potassium</keyword>
<keyword id="KW-0808">Transferase</keyword>
<sequence>MSERKLFTSESVSEGHPDKIADQISDAILDAILAEDPEAHVAAETCVYTGSVHVFGEISTTAYIDINRVVRDTIAEIGYTEAEYGFSAESVGVHPSLVEQSGDIAQGVNEALESREGDTDDLSHIGAGDQGLMFGFAINETPELMPLPISLSHQLVRRLAELRKSGEISYLRPDAKSQVTVEYDEHDKPVRVDTVVISTQHDPEATNDQIRQDVIEKVIKAVIPADYLDDDTKFFINPTGRFVIGGPQGDSGLTGRKIIVDTYGGYSRHGGGAFSGKDATKVDRSASYAARYIAKNLVAAGLATKAEVQLAYAIGVAQPVSVRVDTFGTSTVPEAVLEAAVRQVFDLRPAGIIQMLDLKRPIYKQTAAYGHMGRTDIDLPWERLNKVDALVEAVKTVL</sequence>
<accession>B5XM14</accession>